<comment type="function">
    <text>Regulatory photoreceptor which exists in two forms that are reversibly interconvertible by light: the Pr form that absorbs maximally in the red region of the spectrum and the Pfr form that absorbs maximally in the far-red region. Photoconversion of Pr to Pfr induces an array of morphogenic responses, whereas reconversion of Pfr to Pr cancels the induction of those responses. Pfr controls the expression of a number of nuclear genes including those encoding the small subunit of ribulose-bisphosphate carboxylase, chlorophyll A/B binding protein, protochlorophyllide reductase, rRNA, etc. It also controls the expression of its own gene(s) in a negative feedback fashion.</text>
</comment>
<comment type="subunit">
    <text>Homodimer.</text>
</comment>
<comment type="PTM">
    <text evidence="1">Contains one covalently linked phytochromobilin chromophore.</text>
</comment>
<comment type="similarity">
    <text evidence="5">Belongs to the phytochrome family.</text>
</comment>
<gene>
    <name type="primary">PHYA</name>
</gene>
<evidence type="ECO:0000250" key="1"/>
<evidence type="ECO:0000255" key="2">
    <source>
        <dbReference type="PROSITE-ProRule" id="PRU00107"/>
    </source>
</evidence>
<evidence type="ECO:0000255" key="3">
    <source>
        <dbReference type="PROSITE-ProRule" id="PRU00140"/>
    </source>
</evidence>
<evidence type="ECO:0000256" key="4">
    <source>
        <dbReference type="SAM" id="MobiDB-lite"/>
    </source>
</evidence>
<evidence type="ECO:0000305" key="5"/>
<reference key="1">
    <citation type="journal article" date="1988" name="Plant Mol. Biol.">
        <title>Nucleotide sequence and expression of the phytochrome gene in Pisum sativum: differential regulation by light of multiple transcripts.</title>
        <authorList>
            <person name="Sato N."/>
        </authorList>
        <dbReference type="AGRICOLA" id="IND92000014"/>
    </citation>
    <scope>NUCLEOTIDE SEQUENCE [GENOMIC DNA]</scope>
    <source>
        <strain>cv. Alaska</strain>
    </source>
</reference>
<protein>
    <recommendedName>
        <fullName>Phytochrome A</fullName>
    </recommendedName>
</protein>
<sequence>MSTTRPSQSSNNSGRSRNSARIIAQTTVDAKLHATFEESGSSFDYSSSVRVSGSVDGDQQPRSNKVTTAYLNHIQRGKQIQPFGCLLALDEKTCKVVAYSENAPEMLTMVSHAVPSVGDHPALGIGTDIRTVFTAPSASALQKALGFAEVSLLNPILVHCKTSGKPFYAIIHRVTGSLIIDFEPVKPYEVPMTAAGALQSYKLAAKAITRLQSLASGSMERLCDTMVQEVFELTGYDRVMAYKFHEDDHGEVIAEIAKPGLEPYLGLHYPATDIPQAARFLFMKNKVRMIVDCNAKHVKVLQDEKLPFDLTLCGSTLRAPHSCHLQYMANMDSIASLVMAVVVNDSDEDGDSADAVLPQKKKRLWGLVVCHNTTPRFVPFPLRYACEFLAQVFAIHVNKEIELEYQILEKNILRTQTLLCDMLMRDAPLGIVSQSPNIMDLVKCDGAALFYRNKLWLLGATPTESQLREIALWMSEYHTDSTGLSTDSLSDAGFPGALSLSDTVCGMAAVRITSKDIVFWFRSHTAAEIRWGGAKHEPGDQDDGRKMHPRSSFKAFLEVVKARSVPWKDFEMDAIHSLQLILRNASKDTDIIDLNTKAINTRLNDLKIEGMQELEAVTSEMVRLIETATVPILAVDVDGTVNGWNIKIAELTGLPVGEAIGKHLLTLVEDSSTDIVKKMLNLALQGEEEKNVQFEIKTHGDQVESGPISLIVNACASKDLRENVVGVCFVAQDITAQKTVMDKFTRIEGDYKAIVQNPNQLIPPIFGTDEFGWCCEWNAAMIKLTGWKREEVMDKMLLGEVFGTQMSCCRLKNQEAFVNFGIVLNKAMTGLETEKVPFGFFSRKGKYVECLLSVSKKIDAEGLVTGVFCFLQLASPELQQALHIQRLSEQTALKRLKVLTYMKRQIRNPLAGIVFSSKMLEGTDLETEQKRIVNTSSQCQRQLSKILDDSDLDGIIDGYLDLEMAEFTLHEVLVTSLSQVMNRSNTKGIRIANDVAEHIARETLYGDSLRLQQVLADFLLISINSTPNGGQVVIAASLTKEQLGKSVHLVNLELSITHGGSGVPEAALNQMFGNNVLESEEGISLHISRKLLKLMNGDVRYLKEAGKSSFILSVELAAAHKLKG</sequence>
<feature type="chain" id="PRO_0000171980" description="Phytochrome A">
    <location>
        <begin position="1"/>
        <end position="1124"/>
    </location>
</feature>
<feature type="domain" description="GAF">
    <location>
        <begin position="218"/>
        <end position="401"/>
    </location>
</feature>
<feature type="domain" description="PAS 1" evidence="3">
    <location>
        <begin position="617"/>
        <end position="687"/>
    </location>
</feature>
<feature type="domain" description="PAS 2" evidence="3">
    <location>
        <begin position="750"/>
        <end position="821"/>
    </location>
</feature>
<feature type="domain" description="Histidine kinase" evidence="2">
    <location>
        <begin position="901"/>
        <end position="1120"/>
    </location>
</feature>
<feature type="region of interest" description="Disordered" evidence="4">
    <location>
        <begin position="1"/>
        <end position="21"/>
    </location>
</feature>
<feature type="compositionally biased region" description="Low complexity" evidence="4">
    <location>
        <begin position="1"/>
        <end position="19"/>
    </location>
</feature>
<feature type="binding site" description="covalent" evidence="1">
    <location>
        <position position="323"/>
    </location>
    <ligand>
        <name>phytochromobilin</name>
        <dbReference type="ChEBI" id="CHEBI:189064"/>
    </ligand>
</feature>
<keyword id="KW-0157">Chromophore</keyword>
<keyword id="KW-0600">Photoreceptor protein</keyword>
<keyword id="KW-0675">Receptor</keyword>
<keyword id="KW-0677">Repeat</keyword>
<keyword id="KW-0716">Sensory transduction</keyword>
<keyword id="KW-0804">Transcription</keyword>
<keyword id="KW-0805">Transcription regulation</keyword>
<proteinExistence type="inferred from homology"/>
<organism>
    <name type="scientific">Pisum sativum</name>
    <name type="common">Garden pea</name>
    <name type="synonym">Lathyrus oleraceus</name>
    <dbReference type="NCBI Taxonomy" id="3888"/>
    <lineage>
        <taxon>Eukaryota</taxon>
        <taxon>Viridiplantae</taxon>
        <taxon>Streptophyta</taxon>
        <taxon>Embryophyta</taxon>
        <taxon>Tracheophyta</taxon>
        <taxon>Spermatophyta</taxon>
        <taxon>Magnoliopsida</taxon>
        <taxon>eudicotyledons</taxon>
        <taxon>Gunneridae</taxon>
        <taxon>Pentapetalae</taxon>
        <taxon>rosids</taxon>
        <taxon>fabids</taxon>
        <taxon>Fabales</taxon>
        <taxon>Fabaceae</taxon>
        <taxon>Papilionoideae</taxon>
        <taxon>50 kb inversion clade</taxon>
        <taxon>NPAAA clade</taxon>
        <taxon>Hologalegina</taxon>
        <taxon>IRL clade</taxon>
        <taxon>Fabeae</taxon>
        <taxon>Pisum</taxon>
    </lineage>
</organism>
<accession>P15001</accession>
<dbReference type="EMBL" id="M37217">
    <property type="protein sequence ID" value="AAA33682.1"/>
    <property type="molecule type" value="Genomic_DNA"/>
</dbReference>
<dbReference type="EMBL" id="X14077">
    <property type="protein sequence ID" value="CAA32242.1"/>
    <property type="molecule type" value="Genomic_DNA"/>
</dbReference>
<dbReference type="PIR" id="S06856">
    <property type="entry name" value="S06856"/>
</dbReference>
<dbReference type="SMR" id="P15001"/>
<dbReference type="EnsemblPlants" id="Psat6g156640.1">
    <property type="protein sequence ID" value="Psat6g156640.1.cds"/>
    <property type="gene ID" value="Psat6g156640"/>
</dbReference>
<dbReference type="EnsemblPlants" id="Psat6g156640.3">
    <property type="protein sequence ID" value="Psat6g156640.3.cds"/>
    <property type="gene ID" value="Psat6g156640"/>
</dbReference>
<dbReference type="Gramene" id="Psat6g156640.1">
    <property type="protein sequence ID" value="Psat6g156640.1.cds"/>
    <property type="gene ID" value="Psat6g156640"/>
</dbReference>
<dbReference type="Gramene" id="Psat6g156640.3">
    <property type="protein sequence ID" value="Psat6g156640.3.cds"/>
    <property type="gene ID" value="Psat6g156640"/>
</dbReference>
<dbReference type="OrthoDB" id="2015534at2759"/>
<dbReference type="GO" id="GO:0000155">
    <property type="term" value="F:phosphorelay sensor kinase activity"/>
    <property type="evidence" value="ECO:0007669"/>
    <property type="project" value="InterPro"/>
</dbReference>
<dbReference type="GO" id="GO:0009881">
    <property type="term" value="F:photoreceptor activity"/>
    <property type="evidence" value="ECO:0007669"/>
    <property type="project" value="UniProtKB-KW"/>
</dbReference>
<dbReference type="GO" id="GO:0042803">
    <property type="term" value="F:protein homodimerization activity"/>
    <property type="evidence" value="ECO:0007669"/>
    <property type="project" value="InterPro"/>
</dbReference>
<dbReference type="GO" id="GO:0009584">
    <property type="term" value="P:detection of visible light"/>
    <property type="evidence" value="ECO:0007669"/>
    <property type="project" value="InterPro"/>
</dbReference>
<dbReference type="GO" id="GO:0009585">
    <property type="term" value="P:red, far-red light phototransduction"/>
    <property type="evidence" value="ECO:0007669"/>
    <property type="project" value="InterPro"/>
</dbReference>
<dbReference type="GO" id="GO:0006355">
    <property type="term" value="P:regulation of DNA-templated transcription"/>
    <property type="evidence" value="ECO:0007669"/>
    <property type="project" value="InterPro"/>
</dbReference>
<dbReference type="CDD" id="cd00082">
    <property type="entry name" value="HisKA"/>
    <property type="match status" value="1"/>
</dbReference>
<dbReference type="CDD" id="cd00130">
    <property type="entry name" value="PAS"/>
    <property type="match status" value="2"/>
</dbReference>
<dbReference type="FunFam" id="3.30.450.20:FF:000039">
    <property type="entry name" value="Phytochrome"/>
    <property type="match status" value="1"/>
</dbReference>
<dbReference type="FunFam" id="3.30.450.270:FF:000001">
    <property type="entry name" value="Phytochrome"/>
    <property type="match status" value="1"/>
</dbReference>
<dbReference type="Gene3D" id="1.10.287.130">
    <property type="match status" value="1"/>
</dbReference>
<dbReference type="Gene3D" id="3.30.450.270">
    <property type="match status" value="1"/>
</dbReference>
<dbReference type="Gene3D" id="3.30.450.40">
    <property type="match status" value="1"/>
</dbReference>
<dbReference type="Gene3D" id="3.30.565.10">
    <property type="entry name" value="Histidine kinase-like ATPase, C-terminal domain"/>
    <property type="match status" value="1"/>
</dbReference>
<dbReference type="Gene3D" id="3.30.450.20">
    <property type="entry name" value="PAS domain"/>
    <property type="match status" value="3"/>
</dbReference>
<dbReference type="InterPro" id="IPR003018">
    <property type="entry name" value="GAF"/>
</dbReference>
<dbReference type="InterPro" id="IPR029016">
    <property type="entry name" value="GAF-like_dom_sf"/>
</dbReference>
<dbReference type="InterPro" id="IPR036890">
    <property type="entry name" value="HATPase_C_sf"/>
</dbReference>
<dbReference type="InterPro" id="IPR005467">
    <property type="entry name" value="His_kinase_dom"/>
</dbReference>
<dbReference type="InterPro" id="IPR003661">
    <property type="entry name" value="HisK_dim/P_dom"/>
</dbReference>
<dbReference type="InterPro" id="IPR000014">
    <property type="entry name" value="PAS"/>
</dbReference>
<dbReference type="InterPro" id="IPR035965">
    <property type="entry name" value="PAS-like_dom_sf"/>
</dbReference>
<dbReference type="InterPro" id="IPR013654">
    <property type="entry name" value="PAS_2"/>
</dbReference>
<dbReference type="InterPro" id="IPR013767">
    <property type="entry name" value="PAS_fold"/>
</dbReference>
<dbReference type="InterPro" id="IPR016132">
    <property type="entry name" value="Phyto_chromo_attachment"/>
</dbReference>
<dbReference type="InterPro" id="IPR013516">
    <property type="entry name" value="Phyto_chromo_BS"/>
</dbReference>
<dbReference type="InterPro" id="IPR001294">
    <property type="entry name" value="Phytochrome"/>
</dbReference>
<dbReference type="InterPro" id="IPR012129">
    <property type="entry name" value="Phytochrome_A-E"/>
</dbReference>
<dbReference type="InterPro" id="IPR013515">
    <property type="entry name" value="Phytochrome_cen-reg"/>
</dbReference>
<dbReference type="InterPro" id="IPR043150">
    <property type="entry name" value="Phytochrome_PHY_sf"/>
</dbReference>
<dbReference type="NCBIfam" id="TIGR00229">
    <property type="entry name" value="sensory_box"/>
    <property type="match status" value="1"/>
</dbReference>
<dbReference type="PANTHER" id="PTHR47876">
    <property type="entry name" value="OS08G0260000 PROTEIN"/>
    <property type="match status" value="1"/>
</dbReference>
<dbReference type="PANTHER" id="PTHR47876:SF3">
    <property type="entry name" value="PHYTOCHROME 1"/>
    <property type="match status" value="1"/>
</dbReference>
<dbReference type="Pfam" id="PF01590">
    <property type="entry name" value="GAF"/>
    <property type="match status" value="1"/>
</dbReference>
<dbReference type="Pfam" id="PF02518">
    <property type="entry name" value="HATPase_c"/>
    <property type="match status" value="1"/>
</dbReference>
<dbReference type="Pfam" id="PF00512">
    <property type="entry name" value="HisKA"/>
    <property type="match status" value="1"/>
</dbReference>
<dbReference type="Pfam" id="PF00989">
    <property type="entry name" value="PAS"/>
    <property type="match status" value="2"/>
</dbReference>
<dbReference type="Pfam" id="PF08446">
    <property type="entry name" value="PAS_2"/>
    <property type="match status" value="1"/>
</dbReference>
<dbReference type="Pfam" id="PF00360">
    <property type="entry name" value="PHY"/>
    <property type="match status" value="1"/>
</dbReference>
<dbReference type="PIRSF" id="PIRSF000084">
    <property type="entry name" value="Phytochrome"/>
    <property type="match status" value="1"/>
</dbReference>
<dbReference type="PRINTS" id="PR01033">
    <property type="entry name" value="PHYTOCHROME"/>
</dbReference>
<dbReference type="SMART" id="SM00065">
    <property type="entry name" value="GAF"/>
    <property type="match status" value="1"/>
</dbReference>
<dbReference type="SMART" id="SM00387">
    <property type="entry name" value="HATPase_c"/>
    <property type="match status" value="1"/>
</dbReference>
<dbReference type="SMART" id="SM00388">
    <property type="entry name" value="HisKA"/>
    <property type="match status" value="1"/>
</dbReference>
<dbReference type="SMART" id="SM00091">
    <property type="entry name" value="PAS"/>
    <property type="match status" value="2"/>
</dbReference>
<dbReference type="SUPFAM" id="SSF55874">
    <property type="entry name" value="ATPase domain of HSP90 chaperone/DNA topoisomerase II/histidine kinase"/>
    <property type="match status" value="1"/>
</dbReference>
<dbReference type="SUPFAM" id="SSF55781">
    <property type="entry name" value="GAF domain-like"/>
    <property type="match status" value="2"/>
</dbReference>
<dbReference type="SUPFAM" id="SSF55785">
    <property type="entry name" value="PYP-like sensor domain (PAS domain)"/>
    <property type="match status" value="3"/>
</dbReference>
<dbReference type="PROSITE" id="PS50109">
    <property type="entry name" value="HIS_KIN"/>
    <property type="match status" value="1"/>
</dbReference>
<dbReference type="PROSITE" id="PS50112">
    <property type="entry name" value="PAS"/>
    <property type="match status" value="2"/>
</dbReference>
<dbReference type="PROSITE" id="PS00245">
    <property type="entry name" value="PHYTOCHROME_1"/>
    <property type="match status" value="1"/>
</dbReference>
<dbReference type="PROSITE" id="PS50046">
    <property type="entry name" value="PHYTOCHROME_2"/>
    <property type="match status" value="1"/>
</dbReference>
<name>PHYA_PEA</name>